<feature type="chain" id="PRO_1000064151" description="UPF0223 protein SSA_0938">
    <location>
        <begin position="1"/>
        <end position="92"/>
    </location>
</feature>
<dbReference type="EMBL" id="CP000387">
    <property type="protein sequence ID" value="ABN44360.1"/>
    <property type="molecule type" value="Genomic_DNA"/>
</dbReference>
<dbReference type="RefSeq" id="WP_011836813.1">
    <property type="nucleotide sequence ID" value="NC_009009.1"/>
</dbReference>
<dbReference type="RefSeq" id="YP_001034910.1">
    <property type="nucleotide sequence ID" value="NC_009009.1"/>
</dbReference>
<dbReference type="SMR" id="A3CMF5"/>
<dbReference type="STRING" id="388919.SSA_0938"/>
<dbReference type="KEGG" id="ssa:SSA_0938"/>
<dbReference type="PATRIC" id="fig|388919.9.peg.892"/>
<dbReference type="eggNOG" id="COG4476">
    <property type="taxonomic scope" value="Bacteria"/>
</dbReference>
<dbReference type="HOGENOM" id="CLU_166693_0_0_9"/>
<dbReference type="OrthoDB" id="1649074at2"/>
<dbReference type="Proteomes" id="UP000002148">
    <property type="component" value="Chromosome"/>
</dbReference>
<dbReference type="Gene3D" id="1.10.220.80">
    <property type="entry name" value="BH2638-like"/>
    <property type="match status" value="1"/>
</dbReference>
<dbReference type="HAMAP" id="MF_01041">
    <property type="entry name" value="UPF0223"/>
    <property type="match status" value="1"/>
</dbReference>
<dbReference type="InterPro" id="IPR023324">
    <property type="entry name" value="BH2638-like_sf"/>
</dbReference>
<dbReference type="InterPro" id="IPR007920">
    <property type="entry name" value="UPF0223"/>
</dbReference>
<dbReference type="NCBIfam" id="NF003353">
    <property type="entry name" value="PRK04387.1"/>
    <property type="match status" value="1"/>
</dbReference>
<dbReference type="Pfam" id="PF05256">
    <property type="entry name" value="UPF0223"/>
    <property type="match status" value="1"/>
</dbReference>
<dbReference type="PIRSF" id="PIRSF037260">
    <property type="entry name" value="UPF0223"/>
    <property type="match status" value="1"/>
</dbReference>
<dbReference type="SUPFAM" id="SSF158504">
    <property type="entry name" value="BH2638-like"/>
    <property type="match status" value="1"/>
</dbReference>
<proteinExistence type="inferred from homology"/>
<gene>
    <name type="ordered locus">SSA_0938</name>
</gene>
<evidence type="ECO:0000255" key="1">
    <source>
        <dbReference type="HAMAP-Rule" id="MF_01041"/>
    </source>
</evidence>
<comment type="similarity">
    <text evidence="1">Belongs to the UPF0223 family.</text>
</comment>
<name>Y938_STRSV</name>
<accession>A3CMF5</accession>
<sequence>MNKNYSYPLDLSWSTEELASVLSFFNNVEAAYEQKVQAEKLLKSYEAFKQVVPSKGQEKRIGREFENVSGYSLYHAVQEAKSKGKGSISLGK</sequence>
<reference key="1">
    <citation type="journal article" date="2007" name="J. Bacteriol.">
        <title>Genome of the opportunistic pathogen Streptococcus sanguinis.</title>
        <authorList>
            <person name="Xu P."/>
            <person name="Alves J.M."/>
            <person name="Kitten T."/>
            <person name="Brown A."/>
            <person name="Chen Z."/>
            <person name="Ozaki L.S."/>
            <person name="Manque P."/>
            <person name="Ge X."/>
            <person name="Serrano M.G."/>
            <person name="Puiu D."/>
            <person name="Hendricks S."/>
            <person name="Wang Y."/>
            <person name="Chaplin M.D."/>
            <person name="Akan D."/>
            <person name="Paik S."/>
            <person name="Peterson D.L."/>
            <person name="Macrina F.L."/>
            <person name="Buck G.A."/>
        </authorList>
    </citation>
    <scope>NUCLEOTIDE SEQUENCE [LARGE SCALE GENOMIC DNA]</scope>
    <source>
        <strain>SK36</strain>
    </source>
</reference>
<organism>
    <name type="scientific">Streptococcus sanguinis (strain SK36)</name>
    <dbReference type="NCBI Taxonomy" id="388919"/>
    <lineage>
        <taxon>Bacteria</taxon>
        <taxon>Bacillati</taxon>
        <taxon>Bacillota</taxon>
        <taxon>Bacilli</taxon>
        <taxon>Lactobacillales</taxon>
        <taxon>Streptococcaceae</taxon>
        <taxon>Streptococcus</taxon>
    </lineage>
</organism>
<protein>
    <recommendedName>
        <fullName evidence="1">UPF0223 protein SSA_0938</fullName>
    </recommendedName>
</protein>
<keyword id="KW-1185">Reference proteome</keyword>